<keyword id="KW-1003">Cell membrane</keyword>
<keyword id="KW-1015">Disulfide bond</keyword>
<keyword id="KW-0325">Glycoprotein</keyword>
<keyword id="KW-0391">Immunity</keyword>
<keyword id="KW-0395">Inflammatory response</keyword>
<keyword id="KW-0399">Innate immunity</keyword>
<keyword id="KW-0430">Lectin</keyword>
<keyword id="KW-0472">Membrane</keyword>
<keyword id="KW-0479">Metal-binding</keyword>
<keyword id="KW-0597">Phosphoprotein</keyword>
<keyword id="KW-1185">Reference proteome</keyword>
<keyword id="KW-0735">Signal-anchor</keyword>
<keyword id="KW-0812">Transmembrane</keyword>
<keyword id="KW-1133">Transmembrane helix</keyword>
<reference key="1">
    <citation type="journal article" date="2003" name="Blood">
        <title>Simian immunodeficiency virus dramatically alters expression of homeostatic chemokines and dendritic cell markers during infection in vivo.</title>
        <authorList>
            <person name="Choi Y.K."/>
            <person name="Fallert B.A."/>
            <person name="Murphey-Corb M.A."/>
            <person name="Reinhart T.A."/>
        </authorList>
    </citation>
    <scope>NUCLEOTIDE SEQUENCE [MRNA]</scope>
    <scope>TISSUE SPECIFICITY</scope>
</reference>
<evidence type="ECO:0000250" key="1">
    <source>
        <dbReference type="UniProtKB" id="Q6QLQ4"/>
    </source>
</evidence>
<evidence type="ECO:0000255" key="2"/>
<evidence type="ECO:0000255" key="3">
    <source>
        <dbReference type="PROSITE-ProRule" id="PRU00040"/>
    </source>
</evidence>
<evidence type="ECO:0000256" key="4">
    <source>
        <dbReference type="SAM" id="MobiDB-lite"/>
    </source>
</evidence>
<evidence type="ECO:0000269" key="5">
    <source>
    </source>
</evidence>
<sequence>MEYHPDLENLDEDGYTQLHFDSRSNTRIAVVSEKGSCVASPPWRLIAVILGILCLVILVIAVVLGTMAIWRPNSGRNSLENGYFPSRNKENHSQPTQSPLEESVTPTKAVKTTGVLSSPCPPNWIIYEKSCYLFSPSLNSWDQSKRQCSQLGSNLIKIDSSKELGFIVKQVSSQPDNSFWIGLSRPQTEVPWLWEDGSTFSSNLFQIRTTATQENPSPNCVWIHVSVIYDQLCSVPSCSICEKKFSM</sequence>
<comment type="function">
    <text evidence="1">Lectin that functions as a pattern recognizing receptor (PRR) specific for beta-1,3-linked and beta-1,6-linked glucans, which constitute cell wall constituents from pathogenic bacteria and fungi. Necessary for the TLR2-mediated inflammatory response and activation of NF-kappa-B: upon beta-glucan binding, recruits SYK via its ITAM motif and promotes a signaling cascade that activates some CARD domain-BCL10-MALT1 (CBM) signalosomes, leading to the activation of NF-kappa-B and MAP kinase p38 (MAPK11, MAPK12, MAPK13 and/or MAPK14) pathways which stimulate expression of genes encoding pro-inflammatory cytokines and chemokines. Enhances cytokine production in macrophages and dendritic cells. Mediates production of reactive oxygen species in the cell. Mediates phagocytosis of C.albicans conidia. Binds T-cells in a way that does not involve their surface glycans and plays a role in T-cell activation. Stimulates T-cell proliferation. Induces phosphorylation of SCIMP after binding beta-glucans.</text>
</comment>
<comment type="subunit">
    <text evidence="1">Homodimer. Interacts with SYK; participates in leukocyte activation in presence of fungal pathogens. Interacts with CD37; this interaction controls CLEC7A-mediated IL-6 production.</text>
</comment>
<comment type="subcellular location">
    <subcellularLocation>
        <location evidence="1">Cell membrane</location>
        <topology evidence="1">Single-pass type II membrane protein</topology>
    </subcellularLocation>
</comment>
<comment type="tissue specificity">
    <text evidence="5">Detected in dendritic cells, in paracortical and medullary regions of lymph nodes, and in spleen red pulp and white pulp.</text>
</comment>
<comment type="PTM">
    <text evidence="1">Phosphorylated on tyrosine residues in response to beta-glucan binding.</text>
</comment>
<organism>
    <name type="scientific">Macaca mulatta</name>
    <name type="common">Rhesus macaque</name>
    <dbReference type="NCBI Taxonomy" id="9544"/>
    <lineage>
        <taxon>Eukaryota</taxon>
        <taxon>Metazoa</taxon>
        <taxon>Chordata</taxon>
        <taxon>Craniata</taxon>
        <taxon>Vertebrata</taxon>
        <taxon>Euteleostomi</taxon>
        <taxon>Mammalia</taxon>
        <taxon>Eutheria</taxon>
        <taxon>Euarchontoglires</taxon>
        <taxon>Primates</taxon>
        <taxon>Haplorrhini</taxon>
        <taxon>Catarrhini</taxon>
        <taxon>Cercopithecidae</taxon>
        <taxon>Cercopithecinae</taxon>
        <taxon>Macaca</taxon>
    </lineage>
</organism>
<dbReference type="EMBL" id="AF508729">
    <property type="protein sequence ID" value="AAN47097.1"/>
    <property type="molecule type" value="mRNA"/>
</dbReference>
<dbReference type="RefSeq" id="NP_001028115.1">
    <property type="nucleotide sequence ID" value="NM_001032943.1"/>
</dbReference>
<dbReference type="SMR" id="Q8HZR8"/>
<dbReference type="FunCoup" id="Q8HZR8">
    <property type="interactions" value="314"/>
</dbReference>
<dbReference type="STRING" id="9544.ENSMMUP00000002925"/>
<dbReference type="GlyCosmos" id="Q8HZR8">
    <property type="glycosylation" value="1 site, No reported glycans"/>
</dbReference>
<dbReference type="PaxDb" id="9544-ENSMMUP00000002923"/>
<dbReference type="GeneID" id="574356"/>
<dbReference type="KEGG" id="mcc:574356"/>
<dbReference type="CTD" id="64581"/>
<dbReference type="eggNOG" id="KOG4297">
    <property type="taxonomic scope" value="Eukaryota"/>
</dbReference>
<dbReference type="InParanoid" id="Q8HZR8"/>
<dbReference type="OrthoDB" id="2142683at2759"/>
<dbReference type="Proteomes" id="UP000006718">
    <property type="component" value="Unassembled WGS sequence"/>
</dbReference>
<dbReference type="GO" id="GO:0009986">
    <property type="term" value="C:cell surface"/>
    <property type="evidence" value="ECO:0000318"/>
    <property type="project" value="GO_Central"/>
</dbReference>
<dbReference type="GO" id="GO:0005886">
    <property type="term" value="C:plasma membrane"/>
    <property type="evidence" value="ECO:0007669"/>
    <property type="project" value="UniProtKB-SubCell"/>
</dbReference>
<dbReference type="GO" id="GO:0001872">
    <property type="term" value="F:(1-&gt;3)-beta-D-glucan binding"/>
    <property type="evidence" value="ECO:0000250"/>
    <property type="project" value="UniProtKB"/>
</dbReference>
<dbReference type="GO" id="GO:0046872">
    <property type="term" value="F:metal ion binding"/>
    <property type="evidence" value="ECO:0007669"/>
    <property type="project" value="UniProtKB-KW"/>
</dbReference>
<dbReference type="GO" id="GO:0038187">
    <property type="term" value="F:pattern recognition receptor activity"/>
    <property type="evidence" value="ECO:0000250"/>
    <property type="project" value="UniProtKB"/>
</dbReference>
<dbReference type="GO" id="GO:0061760">
    <property type="term" value="P:antifungal innate immune response"/>
    <property type="evidence" value="ECO:0000250"/>
    <property type="project" value="UniProtKB"/>
</dbReference>
<dbReference type="GO" id="GO:0071226">
    <property type="term" value="P:cellular response to molecule of fungal origin"/>
    <property type="evidence" value="ECO:0000250"/>
    <property type="project" value="UniProtKB"/>
</dbReference>
<dbReference type="GO" id="GO:0032491">
    <property type="term" value="P:detection of molecule of fungal origin"/>
    <property type="evidence" value="ECO:0000250"/>
    <property type="project" value="UniProtKB"/>
</dbReference>
<dbReference type="GO" id="GO:0006954">
    <property type="term" value="P:inflammatory response"/>
    <property type="evidence" value="ECO:0007669"/>
    <property type="project" value="UniProtKB-KW"/>
</dbReference>
<dbReference type="GO" id="GO:0045087">
    <property type="term" value="P:innate immune response"/>
    <property type="evidence" value="ECO:0000318"/>
    <property type="project" value="GO_Central"/>
</dbReference>
<dbReference type="GO" id="GO:0006910">
    <property type="term" value="P:phagocytosis, recognition"/>
    <property type="evidence" value="ECO:0000318"/>
    <property type="project" value="GO_Central"/>
</dbReference>
<dbReference type="GO" id="GO:0043123">
    <property type="term" value="P:positive regulation of canonical NF-kappaB signal transduction"/>
    <property type="evidence" value="ECO:0000250"/>
    <property type="project" value="UniProtKB"/>
</dbReference>
<dbReference type="GO" id="GO:0002720">
    <property type="term" value="P:positive regulation of cytokine production involved in immune response"/>
    <property type="evidence" value="ECO:0000318"/>
    <property type="project" value="GO_Central"/>
</dbReference>
<dbReference type="GO" id="GO:2000318">
    <property type="term" value="P:positive regulation of T-helper 17 type immune response"/>
    <property type="evidence" value="ECO:0000250"/>
    <property type="project" value="UniProtKB"/>
</dbReference>
<dbReference type="GO" id="GO:0043122">
    <property type="term" value="P:regulation of canonical NF-kappaB signal transduction"/>
    <property type="evidence" value="ECO:0000318"/>
    <property type="project" value="GO_Central"/>
</dbReference>
<dbReference type="CDD" id="cd03593">
    <property type="entry name" value="CLECT_NK_receptors_like"/>
    <property type="match status" value="1"/>
</dbReference>
<dbReference type="FunFam" id="3.10.100.10:FF:000069">
    <property type="entry name" value="C-type lectin domain family 7 member A"/>
    <property type="match status" value="1"/>
</dbReference>
<dbReference type="Gene3D" id="3.10.100.10">
    <property type="entry name" value="Mannose-Binding Protein A, subunit A"/>
    <property type="match status" value="1"/>
</dbReference>
<dbReference type="InterPro" id="IPR001304">
    <property type="entry name" value="C-type_lectin-like"/>
</dbReference>
<dbReference type="InterPro" id="IPR016186">
    <property type="entry name" value="C-type_lectin-like/link_sf"/>
</dbReference>
<dbReference type="InterPro" id="IPR042808">
    <property type="entry name" value="CLEC7A"/>
</dbReference>
<dbReference type="InterPro" id="IPR016187">
    <property type="entry name" value="CTDL_fold"/>
</dbReference>
<dbReference type="InterPro" id="IPR033992">
    <property type="entry name" value="NKR-like_CTLD"/>
</dbReference>
<dbReference type="PANTHER" id="PTHR47218">
    <property type="entry name" value="C-TYPE LECTIN DOMAIN FAMILY 7 MEMBER A"/>
    <property type="match status" value="1"/>
</dbReference>
<dbReference type="PANTHER" id="PTHR47218:SF1">
    <property type="entry name" value="C-TYPE LECTIN DOMAIN FAMILY 7 MEMBER A"/>
    <property type="match status" value="1"/>
</dbReference>
<dbReference type="Pfam" id="PF00059">
    <property type="entry name" value="Lectin_C"/>
    <property type="match status" value="1"/>
</dbReference>
<dbReference type="SMART" id="SM00034">
    <property type="entry name" value="CLECT"/>
    <property type="match status" value="1"/>
</dbReference>
<dbReference type="SUPFAM" id="SSF56436">
    <property type="entry name" value="C-type lectin-like"/>
    <property type="match status" value="1"/>
</dbReference>
<dbReference type="PROSITE" id="PS50041">
    <property type="entry name" value="C_TYPE_LECTIN_2"/>
    <property type="match status" value="1"/>
</dbReference>
<accession>Q8HZR8</accession>
<gene>
    <name type="primary">CLEC7A</name>
    <name type="synonym">DECTIN1</name>
</gene>
<proteinExistence type="evidence at transcript level"/>
<feature type="chain" id="PRO_0000269492" description="C-type lectin domain family 7 member A">
    <location>
        <begin position="1"/>
        <end position="247"/>
    </location>
</feature>
<feature type="topological domain" description="Cytoplasmic" evidence="2">
    <location>
        <begin position="1"/>
        <end position="44"/>
    </location>
</feature>
<feature type="transmembrane region" description="Helical; Signal-anchor for type II membrane protein" evidence="2">
    <location>
        <begin position="45"/>
        <end position="65"/>
    </location>
</feature>
<feature type="topological domain" description="Extracellular" evidence="2">
    <location>
        <begin position="66"/>
        <end position="247"/>
    </location>
</feature>
<feature type="domain" description="C-type lectin" evidence="3">
    <location>
        <begin position="127"/>
        <end position="242"/>
    </location>
</feature>
<feature type="region of interest" description="Disordered" evidence="4">
    <location>
        <begin position="81"/>
        <end position="105"/>
    </location>
</feature>
<feature type="short sequence motif" description="ITAM-like">
    <location>
        <begin position="15"/>
        <end position="18"/>
    </location>
</feature>
<feature type="compositionally biased region" description="Polar residues" evidence="4">
    <location>
        <begin position="93"/>
        <end position="105"/>
    </location>
</feature>
<feature type="binding site" evidence="1">
    <location>
        <begin position="146"/>
        <end position="153"/>
    </location>
    <ligand>
        <name>(1,3-beta-D-glucosyl)n</name>
        <dbReference type="ChEBI" id="CHEBI:37671"/>
    </ligand>
</feature>
<feature type="binding site" evidence="1">
    <location>
        <position position="157"/>
    </location>
    <ligand>
        <name>a divalent metal cation</name>
        <dbReference type="ChEBI" id="CHEBI:60240"/>
    </ligand>
</feature>
<feature type="binding site" evidence="1">
    <location>
        <position position="159"/>
    </location>
    <ligand>
        <name>a divalent metal cation</name>
        <dbReference type="ChEBI" id="CHEBI:60240"/>
    </ligand>
</feature>
<feature type="binding site" evidence="1">
    <location>
        <position position="163"/>
    </location>
    <ligand>
        <name>a divalent metal cation</name>
        <dbReference type="ChEBI" id="CHEBI:60240"/>
    </ligand>
</feature>
<feature type="binding site" evidence="1">
    <location>
        <position position="195"/>
    </location>
    <ligand>
        <name>(1,3-beta-D-glucosyl)n</name>
        <dbReference type="ChEBI" id="CHEBI:37671"/>
    </ligand>
</feature>
<feature type="binding site" evidence="1">
    <location>
        <position position="242"/>
    </location>
    <ligand>
        <name>a divalent metal cation</name>
        <dbReference type="ChEBI" id="CHEBI:60240"/>
    </ligand>
</feature>
<feature type="glycosylation site" description="N-linked (GlcNAc...) asparagine" evidence="2">
    <location>
        <position position="91"/>
    </location>
</feature>
<feature type="disulfide bond" evidence="3">
    <location>
        <begin position="120"/>
        <end position="131"/>
    </location>
</feature>
<feature type="disulfide bond" evidence="3">
    <location>
        <begin position="148"/>
        <end position="241"/>
    </location>
</feature>
<feature type="disulfide bond" evidence="3">
    <location>
        <begin position="220"/>
        <end position="233"/>
    </location>
</feature>
<name>CLC7A_MACMU</name>
<protein>
    <recommendedName>
        <fullName>C-type lectin domain family 7 member A</fullName>
    </recommendedName>
    <alternativeName>
        <fullName>Dendritic cell-associated C-type lectin 1</fullName>
        <shortName>DC-associated C-type lectin 1</shortName>
        <shortName>Dectin-1</shortName>
    </alternativeName>
    <cdAntigenName>CD369</cdAntigenName>
</protein>